<protein>
    <recommendedName>
        <fullName evidence="1">Glutamine--fructose-6-phosphate aminotransferase [isomerizing]</fullName>
        <ecNumber evidence="1">2.6.1.16</ecNumber>
    </recommendedName>
    <alternativeName>
        <fullName evidence="1">D-fructose-6-phosphate amidotransferase</fullName>
    </alternativeName>
    <alternativeName>
        <fullName evidence="1">GFAT</fullName>
    </alternativeName>
    <alternativeName>
        <fullName evidence="1">Glucosamine-6-phosphate synthase</fullName>
    </alternativeName>
    <alternativeName>
        <fullName evidence="1">Hexosephosphate aminotransferase</fullName>
    </alternativeName>
    <alternativeName>
        <fullName evidence="1">L-glutamine--D-fructose-6-phosphate amidotransferase</fullName>
    </alternativeName>
</protein>
<dbReference type="EC" id="2.6.1.16" evidence="1"/>
<dbReference type="EMBL" id="AE016826">
    <property type="protein sequence ID" value="AAO26771.1"/>
    <property type="molecule type" value="Genomic_DNA"/>
</dbReference>
<dbReference type="RefSeq" id="WP_011091172.1">
    <property type="nucleotide sequence ID" value="NC_004545.1"/>
</dbReference>
<dbReference type="SMR" id="P59499"/>
<dbReference type="STRING" id="224915.bbp_028"/>
<dbReference type="KEGG" id="bab:bbp_028"/>
<dbReference type="eggNOG" id="COG0449">
    <property type="taxonomic scope" value="Bacteria"/>
</dbReference>
<dbReference type="HOGENOM" id="CLU_012520_5_2_6"/>
<dbReference type="OrthoDB" id="9761808at2"/>
<dbReference type="Proteomes" id="UP000000601">
    <property type="component" value="Chromosome"/>
</dbReference>
<dbReference type="GO" id="GO:0005829">
    <property type="term" value="C:cytosol"/>
    <property type="evidence" value="ECO:0007669"/>
    <property type="project" value="TreeGrafter"/>
</dbReference>
<dbReference type="GO" id="GO:0097367">
    <property type="term" value="F:carbohydrate derivative binding"/>
    <property type="evidence" value="ECO:0007669"/>
    <property type="project" value="InterPro"/>
</dbReference>
<dbReference type="GO" id="GO:0004360">
    <property type="term" value="F:glutamine-fructose-6-phosphate transaminase (isomerizing) activity"/>
    <property type="evidence" value="ECO:0007669"/>
    <property type="project" value="UniProtKB-UniRule"/>
</dbReference>
<dbReference type="GO" id="GO:0005975">
    <property type="term" value="P:carbohydrate metabolic process"/>
    <property type="evidence" value="ECO:0007669"/>
    <property type="project" value="UniProtKB-UniRule"/>
</dbReference>
<dbReference type="GO" id="GO:0006002">
    <property type="term" value="P:fructose 6-phosphate metabolic process"/>
    <property type="evidence" value="ECO:0007669"/>
    <property type="project" value="TreeGrafter"/>
</dbReference>
<dbReference type="GO" id="GO:0006487">
    <property type="term" value="P:protein N-linked glycosylation"/>
    <property type="evidence" value="ECO:0007669"/>
    <property type="project" value="TreeGrafter"/>
</dbReference>
<dbReference type="GO" id="GO:0006047">
    <property type="term" value="P:UDP-N-acetylglucosamine metabolic process"/>
    <property type="evidence" value="ECO:0007669"/>
    <property type="project" value="TreeGrafter"/>
</dbReference>
<dbReference type="CDD" id="cd00714">
    <property type="entry name" value="GFAT"/>
    <property type="match status" value="1"/>
</dbReference>
<dbReference type="CDD" id="cd05008">
    <property type="entry name" value="SIS_GlmS_GlmD_1"/>
    <property type="match status" value="1"/>
</dbReference>
<dbReference type="CDD" id="cd05009">
    <property type="entry name" value="SIS_GlmS_GlmD_2"/>
    <property type="match status" value="1"/>
</dbReference>
<dbReference type="FunFam" id="3.40.50.10490:FF:000001">
    <property type="entry name" value="Glutamine--fructose-6-phosphate aminotransferase [isomerizing]"/>
    <property type="match status" value="1"/>
</dbReference>
<dbReference type="FunFam" id="3.60.20.10:FF:000006">
    <property type="entry name" value="Glutamine--fructose-6-phosphate aminotransferase [isomerizing]"/>
    <property type="match status" value="1"/>
</dbReference>
<dbReference type="Gene3D" id="3.40.50.10490">
    <property type="entry name" value="Glucose-6-phosphate isomerase like protein, domain 1"/>
    <property type="match status" value="2"/>
</dbReference>
<dbReference type="Gene3D" id="3.60.20.10">
    <property type="entry name" value="Glutamine Phosphoribosylpyrophosphate, subunit 1, domain 1"/>
    <property type="match status" value="1"/>
</dbReference>
<dbReference type="HAMAP" id="MF_00164">
    <property type="entry name" value="GlmS"/>
    <property type="match status" value="1"/>
</dbReference>
<dbReference type="InterPro" id="IPR017932">
    <property type="entry name" value="GATase_2_dom"/>
</dbReference>
<dbReference type="InterPro" id="IPR005855">
    <property type="entry name" value="GFAT"/>
</dbReference>
<dbReference type="InterPro" id="IPR047084">
    <property type="entry name" value="GFAT_N"/>
</dbReference>
<dbReference type="InterPro" id="IPR035466">
    <property type="entry name" value="GlmS/AgaS_SIS"/>
</dbReference>
<dbReference type="InterPro" id="IPR035490">
    <property type="entry name" value="GlmS/FrlB_SIS"/>
</dbReference>
<dbReference type="InterPro" id="IPR029055">
    <property type="entry name" value="Ntn_hydrolases_N"/>
</dbReference>
<dbReference type="InterPro" id="IPR001347">
    <property type="entry name" value="SIS_dom"/>
</dbReference>
<dbReference type="InterPro" id="IPR046348">
    <property type="entry name" value="SIS_dom_sf"/>
</dbReference>
<dbReference type="NCBIfam" id="TIGR01135">
    <property type="entry name" value="glmS"/>
    <property type="match status" value="1"/>
</dbReference>
<dbReference type="NCBIfam" id="NF001484">
    <property type="entry name" value="PRK00331.1"/>
    <property type="match status" value="1"/>
</dbReference>
<dbReference type="PANTHER" id="PTHR10937">
    <property type="entry name" value="GLUCOSAMINE--FRUCTOSE-6-PHOSPHATE AMINOTRANSFERASE, ISOMERIZING"/>
    <property type="match status" value="1"/>
</dbReference>
<dbReference type="PANTHER" id="PTHR10937:SF0">
    <property type="entry name" value="GLUTAMINE--FRUCTOSE-6-PHOSPHATE TRANSAMINASE (ISOMERIZING)"/>
    <property type="match status" value="1"/>
</dbReference>
<dbReference type="Pfam" id="PF13522">
    <property type="entry name" value="GATase_6"/>
    <property type="match status" value="1"/>
</dbReference>
<dbReference type="Pfam" id="PF01380">
    <property type="entry name" value="SIS"/>
    <property type="match status" value="2"/>
</dbReference>
<dbReference type="SUPFAM" id="SSF56235">
    <property type="entry name" value="N-terminal nucleophile aminohydrolases (Ntn hydrolases)"/>
    <property type="match status" value="1"/>
</dbReference>
<dbReference type="SUPFAM" id="SSF53697">
    <property type="entry name" value="SIS domain"/>
    <property type="match status" value="1"/>
</dbReference>
<dbReference type="PROSITE" id="PS51278">
    <property type="entry name" value="GATASE_TYPE_2"/>
    <property type="match status" value="1"/>
</dbReference>
<dbReference type="PROSITE" id="PS51464">
    <property type="entry name" value="SIS"/>
    <property type="match status" value="2"/>
</dbReference>
<feature type="initiator methionine" description="Removed" evidence="1">
    <location>
        <position position="1"/>
    </location>
</feature>
<feature type="chain" id="PRO_0000135313" description="Glutamine--fructose-6-phosphate aminotransferase [isomerizing]">
    <location>
        <begin position="2"/>
        <end position="610"/>
    </location>
</feature>
<feature type="domain" description="Glutamine amidotransferase type-2" evidence="1">
    <location>
        <begin position="2"/>
        <end position="220"/>
    </location>
</feature>
<feature type="domain" description="SIS 1" evidence="1">
    <location>
        <begin position="289"/>
        <end position="429"/>
    </location>
</feature>
<feature type="domain" description="SIS 2" evidence="1">
    <location>
        <begin position="461"/>
        <end position="600"/>
    </location>
</feature>
<feature type="active site" description="Nucleophile; for GATase activity" evidence="1">
    <location>
        <position position="2"/>
    </location>
</feature>
<feature type="active site" description="For Fru-6P isomerization activity" evidence="1">
    <location>
        <position position="605"/>
    </location>
</feature>
<name>GLMS_BUCBP</name>
<sequence>MCGIISAISKKNVTNILIEGMKRLEYRGYDSSGLAIINKKKEIIRLRSQGKIKNIINLIHKTKQLIGNIGIAHTRWATHGLALKKNAHPHVSKNIAIVHNGIIENYLNIKTKLQKNGYIFTSDTDTEVIAHLIHYEQNKNNKSLLKTIQTVILKLTGSYSMVIMDRYHPNILIAIRSGSPLLIGLGKQENFISSDQLSLLKITKKFIYLNEGDIAILSHKKITIFNKNSILVHRPIVISNIQNDSITKGHYQHYMKKEIYEQPYAIKNAIRNRITKNEKIQFSELNNNAHALLLKIEHIDIIACGTSYNAGMVSKYWFESLSKISCNVEIASEFCHRKFIVKKNSLLLILSQSGETADSLTALRNSKKHEYLGSLVICNSSSSSLVYESNFSILTNAGIEIGVASTKSFTTQLTILLMIAAKINNLKTNDEKIENKVAKTLRLLPEITKNVLKCDSLIYSLAKELSDKNNIIFIGRGHNYPIAMEGALKLKEISYTHAEAYAAGELKHGPLALVDSSTQIIVIAPNDNLIDKIKLNISEIRTRGGVLHIFSDNLTKFNDNTNVIRLPYDGILLSPIIYVIPLQLLAYYVALIKGKNIDKPRNLAKSVTVE</sequence>
<gene>
    <name evidence="1" type="primary">glmS</name>
    <name type="ordered locus">bbp_028</name>
</gene>
<reference key="1">
    <citation type="journal article" date="2003" name="Proc. Natl. Acad. Sci. U.S.A.">
        <title>Reductive genome evolution in Buchnera aphidicola.</title>
        <authorList>
            <person name="van Ham R.C.H.J."/>
            <person name="Kamerbeek J."/>
            <person name="Palacios C."/>
            <person name="Rausell C."/>
            <person name="Abascal F."/>
            <person name="Bastolla U."/>
            <person name="Fernandez J.M."/>
            <person name="Jimenez L."/>
            <person name="Postigo M."/>
            <person name="Silva F.J."/>
            <person name="Tamames J."/>
            <person name="Viguera E."/>
            <person name="Latorre A."/>
            <person name="Valencia A."/>
            <person name="Moran F."/>
            <person name="Moya A."/>
        </authorList>
    </citation>
    <scope>NUCLEOTIDE SEQUENCE [LARGE SCALE GENOMIC DNA]</scope>
    <source>
        <strain>Bp</strain>
    </source>
</reference>
<organism>
    <name type="scientific">Buchnera aphidicola subsp. Baizongia pistaciae (strain Bp)</name>
    <dbReference type="NCBI Taxonomy" id="224915"/>
    <lineage>
        <taxon>Bacteria</taxon>
        <taxon>Pseudomonadati</taxon>
        <taxon>Pseudomonadota</taxon>
        <taxon>Gammaproteobacteria</taxon>
        <taxon>Enterobacterales</taxon>
        <taxon>Erwiniaceae</taxon>
        <taxon>Buchnera</taxon>
    </lineage>
</organism>
<keyword id="KW-0032">Aminotransferase</keyword>
<keyword id="KW-0963">Cytoplasm</keyword>
<keyword id="KW-0315">Glutamine amidotransferase</keyword>
<keyword id="KW-1185">Reference proteome</keyword>
<keyword id="KW-0677">Repeat</keyword>
<keyword id="KW-0808">Transferase</keyword>
<accession>P59499</accession>
<comment type="function">
    <text evidence="1">Catalyzes the first step in hexosamine metabolism, converting fructose-6P into glucosamine-6P using glutamine as a nitrogen source.</text>
</comment>
<comment type="catalytic activity">
    <reaction evidence="1">
        <text>D-fructose 6-phosphate + L-glutamine = D-glucosamine 6-phosphate + L-glutamate</text>
        <dbReference type="Rhea" id="RHEA:13237"/>
        <dbReference type="ChEBI" id="CHEBI:29985"/>
        <dbReference type="ChEBI" id="CHEBI:58359"/>
        <dbReference type="ChEBI" id="CHEBI:58725"/>
        <dbReference type="ChEBI" id="CHEBI:61527"/>
        <dbReference type="EC" id="2.6.1.16"/>
    </reaction>
</comment>
<comment type="subunit">
    <text evidence="1">Homodimer.</text>
</comment>
<comment type="subcellular location">
    <subcellularLocation>
        <location evidence="1">Cytoplasm</location>
    </subcellularLocation>
</comment>
<proteinExistence type="inferred from homology"/>
<evidence type="ECO:0000255" key="1">
    <source>
        <dbReference type="HAMAP-Rule" id="MF_00164"/>
    </source>
</evidence>